<proteinExistence type="inferred from homology"/>
<geneLocation type="plasmid">
    <name>pSMED01</name>
</geneLocation>
<reference key="1">
    <citation type="submission" date="2007-06" db="EMBL/GenBank/DDBJ databases">
        <title>Complete sequence of Sinorhizobium medicae WSM419 plasmid pSMED01.</title>
        <authorList>
            <consortium name="US DOE Joint Genome Institute"/>
            <person name="Copeland A."/>
            <person name="Lucas S."/>
            <person name="Lapidus A."/>
            <person name="Barry K."/>
            <person name="Glavina del Rio T."/>
            <person name="Dalin E."/>
            <person name="Tice H."/>
            <person name="Pitluck S."/>
            <person name="Chain P."/>
            <person name="Malfatti S."/>
            <person name="Shin M."/>
            <person name="Vergez L."/>
            <person name="Schmutz J."/>
            <person name="Larimer F."/>
            <person name="Land M."/>
            <person name="Hauser L."/>
            <person name="Kyrpides N."/>
            <person name="Mikhailova N."/>
            <person name="Reeve W.G."/>
            <person name="Richardson P."/>
        </authorList>
    </citation>
    <scope>NUCLEOTIDE SEQUENCE [LARGE SCALE GENOMIC DNA]</scope>
    <source>
        <strain>WSM419</strain>
    </source>
</reference>
<gene>
    <name evidence="1" type="primary">groEL4</name>
    <name evidence="1" type="synonym">groL4</name>
    <name type="ordered locus">Smed_4130</name>
</gene>
<comment type="function">
    <text evidence="1">Together with its co-chaperonin GroES, plays an essential role in assisting protein folding. The GroEL-GroES system forms a nano-cage that allows encapsulation of the non-native substrate proteins and provides a physical environment optimized to promote and accelerate protein folding.</text>
</comment>
<comment type="catalytic activity">
    <reaction evidence="1">
        <text>ATP + H2O + a folded polypeptide = ADP + phosphate + an unfolded polypeptide.</text>
        <dbReference type="EC" id="5.6.1.7"/>
    </reaction>
</comment>
<comment type="subunit">
    <text evidence="1">Forms a cylinder of 14 subunits composed of two heptameric rings stacked back-to-back. Interacts with the co-chaperonin GroES.</text>
</comment>
<comment type="subcellular location">
    <subcellularLocation>
        <location evidence="1">Cytoplasm</location>
    </subcellularLocation>
</comment>
<comment type="similarity">
    <text evidence="1">Belongs to the chaperonin (HSP60) family.</text>
</comment>
<dbReference type="EC" id="5.6.1.7" evidence="1"/>
<dbReference type="EMBL" id="CP000739">
    <property type="protein sequence ID" value="ABR62936.1"/>
    <property type="molecule type" value="Genomic_DNA"/>
</dbReference>
<dbReference type="RefSeq" id="YP_001312869.1">
    <property type="nucleotide sequence ID" value="NC_009620.1"/>
</dbReference>
<dbReference type="SMR" id="A6UH06"/>
<dbReference type="KEGG" id="smd:Smed_4130"/>
<dbReference type="PATRIC" id="fig|366394.8.peg.584"/>
<dbReference type="HOGENOM" id="CLU_016503_3_0_5"/>
<dbReference type="OrthoDB" id="9766614at2"/>
<dbReference type="Proteomes" id="UP000001108">
    <property type="component" value="Plasmid pSMED01"/>
</dbReference>
<dbReference type="GO" id="GO:0005737">
    <property type="term" value="C:cytoplasm"/>
    <property type="evidence" value="ECO:0007669"/>
    <property type="project" value="UniProtKB-SubCell"/>
</dbReference>
<dbReference type="GO" id="GO:0005524">
    <property type="term" value="F:ATP binding"/>
    <property type="evidence" value="ECO:0007669"/>
    <property type="project" value="UniProtKB-UniRule"/>
</dbReference>
<dbReference type="GO" id="GO:0140662">
    <property type="term" value="F:ATP-dependent protein folding chaperone"/>
    <property type="evidence" value="ECO:0007669"/>
    <property type="project" value="InterPro"/>
</dbReference>
<dbReference type="GO" id="GO:0016853">
    <property type="term" value="F:isomerase activity"/>
    <property type="evidence" value="ECO:0007669"/>
    <property type="project" value="UniProtKB-KW"/>
</dbReference>
<dbReference type="GO" id="GO:0051082">
    <property type="term" value="F:unfolded protein binding"/>
    <property type="evidence" value="ECO:0007669"/>
    <property type="project" value="UniProtKB-UniRule"/>
</dbReference>
<dbReference type="GO" id="GO:0042026">
    <property type="term" value="P:protein refolding"/>
    <property type="evidence" value="ECO:0007669"/>
    <property type="project" value="UniProtKB-UniRule"/>
</dbReference>
<dbReference type="CDD" id="cd03344">
    <property type="entry name" value="GroEL"/>
    <property type="match status" value="1"/>
</dbReference>
<dbReference type="FunFam" id="3.50.7.10:FF:000001">
    <property type="entry name" value="60 kDa chaperonin"/>
    <property type="match status" value="1"/>
</dbReference>
<dbReference type="Gene3D" id="3.50.7.10">
    <property type="entry name" value="GroEL"/>
    <property type="match status" value="1"/>
</dbReference>
<dbReference type="Gene3D" id="1.10.560.10">
    <property type="entry name" value="GroEL-like equatorial domain"/>
    <property type="match status" value="1"/>
</dbReference>
<dbReference type="Gene3D" id="3.30.260.10">
    <property type="entry name" value="TCP-1-like chaperonin intermediate domain"/>
    <property type="match status" value="1"/>
</dbReference>
<dbReference type="HAMAP" id="MF_00600">
    <property type="entry name" value="CH60"/>
    <property type="match status" value="1"/>
</dbReference>
<dbReference type="InterPro" id="IPR018370">
    <property type="entry name" value="Chaperonin_Cpn60_CS"/>
</dbReference>
<dbReference type="InterPro" id="IPR001844">
    <property type="entry name" value="Cpn60/GroEL"/>
</dbReference>
<dbReference type="InterPro" id="IPR002423">
    <property type="entry name" value="Cpn60/GroEL/TCP-1"/>
</dbReference>
<dbReference type="InterPro" id="IPR027409">
    <property type="entry name" value="GroEL-like_apical_dom_sf"/>
</dbReference>
<dbReference type="InterPro" id="IPR027413">
    <property type="entry name" value="GROEL-like_equatorial_sf"/>
</dbReference>
<dbReference type="InterPro" id="IPR027410">
    <property type="entry name" value="TCP-1-like_intermed_sf"/>
</dbReference>
<dbReference type="NCBIfam" id="TIGR02348">
    <property type="entry name" value="GroEL"/>
    <property type="match status" value="1"/>
</dbReference>
<dbReference type="NCBIfam" id="NF000592">
    <property type="entry name" value="PRK00013.1"/>
    <property type="match status" value="1"/>
</dbReference>
<dbReference type="NCBIfam" id="NF009487">
    <property type="entry name" value="PRK12849.1"/>
    <property type="match status" value="1"/>
</dbReference>
<dbReference type="NCBIfam" id="NF009488">
    <property type="entry name" value="PRK12850.1"/>
    <property type="match status" value="1"/>
</dbReference>
<dbReference type="NCBIfam" id="NF009489">
    <property type="entry name" value="PRK12851.1"/>
    <property type="match status" value="1"/>
</dbReference>
<dbReference type="PANTHER" id="PTHR45633">
    <property type="entry name" value="60 KDA HEAT SHOCK PROTEIN, MITOCHONDRIAL"/>
    <property type="match status" value="1"/>
</dbReference>
<dbReference type="Pfam" id="PF00118">
    <property type="entry name" value="Cpn60_TCP1"/>
    <property type="match status" value="1"/>
</dbReference>
<dbReference type="PRINTS" id="PR00298">
    <property type="entry name" value="CHAPERONIN60"/>
</dbReference>
<dbReference type="SUPFAM" id="SSF52029">
    <property type="entry name" value="GroEL apical domain-like"/>
    <property type="match status" value="1"/>
</dbReference>
<dbReference type="SUPFAM" id="SSF48592">
    <property type="entry name" value="GroEL equatorial domain-like"/>
    <property type="match status" value="1"/>
</dbReference>
<dbReference type="SUPFAM" id="SSF54849">
    <property type="entry name" value="GroEL-intermediate domain like"/>
    <property type="match status" value="1"/>
</dbReference>
<dbReference type="PROSITE" id="PS00296">
    <property type="entry name" value="CHAPERONINS_CPN60"/>
    <property type="match status" value="1"/>
</dbReference>
<organism>
    <name type="scientific">Sinorhizobium medicae (strain WSM419)</name>
    <name type="common">Ensifer medicae</name>
    <dbReference type="NCBI Taxonomy" id="366394"/>
    <lineage>
        <taxon>Bacteria</taxon>
        <taxon>Pseudomonadati</taxon>
        <taxon>Pseudomonadota</taxon>
        <taxon>Alphaproteobacteria</taxon>
        <taxon>Hyphomicrobiales</taxon>
        <taxon>Rhizobiaceae</taxon>
        <taxon>Sinorhizobium/Ensifer group</taxon>
        <taxon>Sinorhizobium</taxon>
    </lineage>
</organism>
<evidence type="ECO:0000255" key="1">
    <source>
        <dbReference type="HAMAP-Rule" id="MF_00600"/>
    </source>
</evidence>
<accession>A6UH06</accession>
<keyword id="KW-0067">ATP-binding</keyword>
<keyword id="KW-0143">Chaperone</keyword>
<keyword id="KW-0963">Cytoplasm</keyword>
<keyword id="KW-0413">Isomerase</keyword>
<keyword id="KW-0547">Nucleotide-binding</keyword>
<keyword id="KW-0614">Plasmid</keyword>
<feature type="chain" id="PRO_0000332086" description="Chaperonin GroEL 4">
    <location>
        <begin position="1"/>
        <end position="544"/>
    </location>
</feature>
<feature type="binding site" evidence="1">
    <location>
        <begin position="30"/>
        <end position="33"/>
    </location>
    <ligand>
        <name>ATP</name>
        <dbReference type="ChEBI" id="CHEBI:30616"/>
    </ligand>
</feature>
<feature type="binding site" evidence="1">
    <location>
        <position position="51"/>
    </location>
    <ligand>
        <name>ATP</name>
        <dbReference type="ChEBI" id="CHEBI:30616"/>
    </ligand>
</feature>
<feature type="binding site" evidence="1">
    <location>
        <begin position="87"/>
        <end position="91"/>
    </location>
    <ligand>
        <name>ATP</name>
        <dbReference type="ChEBI" id="CHEBI:30616"/>
    </ligand>
</feature>
<feature type="binding site" evidence="1">
    <location>
        <position position="415"/>
    </location>
    <ligand>
        <name>ATP</name>
        <dbReference type="ChEBI" id="CHEBI:30616"/>
    </ligand>
</feature>
<feature type="binding site" evidence="1">
    <location>
        <position position="496"/>
    </location>
    <ligand>
        <name>ATP</name>
        <dbReference type="ChEBI" id="CHEBI:30616"/>
    </ligand>
</feature>
<name>CH604_SINMW</name>
<protein>
    <recommendedName>
        <fullName evidence="1">Chaperonin GroEL 4</fullName>
        <ecNumber evidence="1">5.6.1.7</ecNumber>
    </recommendedName>
    <alternativeName>
        <fullName evidence="1">60 kDa chaperonin 4</fullName>
    </alternativeName>
    <alternativeName>
        <fullName evidence="1">Chaperonin-60 4</fullName>
        <shortName evidence="1">Cpn60 4</shortName>
    </alternativeName>
</protein>
<sequence>MSAKEIIFSTEVRDRLLRGVELLNNAVKVTLGPKGRNVVIDRSYGAPRITKDGVSVAKEIELEDKFENMGAQMVREVASKTNDLAGDGTTTATVLAASIFREGAKLVAAGMNPMDLKRGIDLAVTAVLAEIKLRATKVNSSSEIAQVGTIAANGDASVGEMIAGAMEKVGNEGVITVEEARTADTELDVVEGMQFDRGYLSPYFVTNAEKMRVELDDPYILIHEKKLGNLQTMLPILEAVVQSGKPLLIISEDVEGEALTTLVVNKLRGGLKIAAVKSPGFGDRRKAMLQDIAVLTAGQMISEDIGIKLENVTLDMLGRARRVLIEKDTTTIIDGSGDKASIQACISQIKAQIEETTSDYDKEKLQERLAKLTGGVAVIRVGGATELEVKEKKDRIDDALNATRAAVEEGIVAGGGVALLRAKSALASLTGENPEITAGIAIVRKALEAPIRQIADNAGVEGSIVIGKLVDSSDQNQGFDAQTETYVDMIKAGIVDPAKVVRTALRDAGSIAALLITAEAMVADIPEKNAAQNAGNGAMGGRGY</sequence>